<dbReference type="EC" id="2.1.2.9" evidence="1"/>
<dbReference type="EMBL" id="CP000901">
    <property type="protein sequence ID" value="ABX86223.1"/>
    <property type="molecule type" value="Genomic_DNA"/>
</dbReference>
<dbReference type="RefSeq" id="WP_002209020.1">
    <property type="nucleotide sequence ID" value="NZ_CP009935.1"/>
</dbReference>
<dbReference type="SMR" id="A9R926"/>
<dbReference type="GeneID" id="57974363"/>
<dbReference type="KEGG" id="ypg:YpAngola_A0614"/>
<dbReference type="PATRIC" id="fig|349746.12.peg.1566"/>
<dbReference type="GO" id="GO:0005829">
    <property type="term" value="C:cytosol"/>
    <property type="evidence" value="ECO:0007669"/>
    <property type="project" value="TreeGrafter"/>
</dbReference>
<dbReference type="GO" id="GO:0004479">
    <property type="term" value="F:methionyl-tRNA formyltransferase activity"/>
    <property type="evidence" value="ECO:0007669"/>
    <property type="project" value="UniProtKB-UniRule"/>
</dbReference>
<dbReference type="CDD" id="cd08646">
    <property type="entry name" value="FMT_core_Met-tRNA-FMT_N"/>
    <property type="match status" value="1"/>
</dbReference>
<dbReference type="CDD" id="cd08704">
    <property type="entry name" value="Met_tRNA_FMT_C"/>
    <property type="match status" value="1"/>
</dbReference>
<dbReference type="FunFam" id="3.10.25.10:FF:000001">
    <property type="entry name" value="Methionyl-tRNA formyltransferase"/>
    <property type="match status" value="1"/>
</dbReference>
<dbReference type="FunFam" id="3.40.50.12230:FF:000001">
    <property type="entry name" value="Methionyl-tRNA formyltransferase"/>
    <property type="match status" value="1"/>
</dbReference>
<dbReference type="FunFam" id="3.40.50.170:FF:000003">
    <property type="entry name" value="Methionyl-tRNA formyltransferase"/>
    <property type="match status" value="1"/>
</dbReference>
<dbReference type="Gene3D" id="3.10.25.10">
    <property type="entry name" value="Formyl transferase, C-terminal domain"/>
    <property type="match status" value="1"/>
</dbReference>
<dbReference type="Gene3D" id="3.40.50.170">
    <property type="entry name" value="Formyl transferase, N-terminal domain"/>
    <property type="match status" value="1"/>
</dbReference>
<dbReference type="HAMAP" id="MF_00182">
    <property type="entry name" value="Formyl_trans"/>
    <property type="match status" value="1"/>
</dbReference>
<dbReference type="InterPro" id="IPR005794">
    <property type="entry name" value="Fmt"/>
</dbReference>
<dbReference type="InterPro" id="IPR005793">
    <property type="entry name" value="Formyl_trans_C"/>
</dbReference>
<dbReference type="InterPro" id="IPR037022">
    <property type="entry name" value="Formyl_trans_C_sf"/>
</dbReference>
<dbReference type="InterPro" id="IPR002376">
    <property type="entry name" value="Formyl_transf_N"/>
</dbReference>
<dbReference type="InterPro" id="IPR036477">
    <property type="entry name" value="Formyl_transf_N_sf"/>
</dbReference>
<dbReference type="InterPro" id="IPR011034">
    <property type="entry name" value="Formyl_transferase-like_C_sf"/>
</dbReference>
<dbReference type="InterPro" id="IPR001555">
    <property type="entry name" value="GART_AS"/>
</dbReference>
<dbReference type="InterPro" id="IPR044135">
    <property type="entry name" value="Met-tRNA-FMT_C"/>
</dbReference>
<dbReference type="InterPro" id="IPR041711">
    <property type="entry name" value="Met-tRNA-FMT_N"/>
</dbReference>
<dbReference type="NCBIfam" id="TIGR00460">
    <property type="entry name" value="fmt"/>
    <property type="match status" value="1"/>
</dbReference>
<dbReference type="PANTHER" id="PTHR11138">
    <property type="entry name" value="METHIONYL-TRNA FORMYLTRANSFERASE"/>
    <property type="match status" value="1"/>
</dbReference>
<dbReference type="PANTHER" id="PTHR11138:SF5">
    <property type="entry name" value="METHIONYL-TRNA FORMYLTRANSFERASE, MITOCHONDRIAL"/>
    <property type="match status" value="1"/>
</dbReference>
<dbReference type="Pfam" id="PF02911">
    <property type="entry name" value="Formyl_trans_C"/>
    <property type="match status" value="1"/>
</dbReference>
<dbReference type="Pfam" id="PF00551">
    <property type="entry name" value="Formyl_trans_N"/>
    <property type="match status" value="1"/>
</dbReference>
<dbReference type="SUPFAM" id="SSF50486">
    <property type="entry name" value="FMT C-terminal domain-like"/>
    <property type="match status" value="1"/>
</dbReference>
<dbReference type="SUPFAM" id="SSF53328">
    <property type="entry name" value="Formyltransferase"/>
    <property type="match status" value="1"/>
</dbReference>
<dbReference type="PROSITE" id="PS00373">
    <property type="entry name" value="GART"/>
    <property type="match status" value="1"/>
</dbReference>
<sequence length="315" mass="34140">MSDSLRIIFAGTPDFAARHLGALLSSQHKIVGVFTQPDRPAGRGNKLTPSPVKILAEHHGIPVFQPKSLRPEENQHLVADLNADIMVVVAYGLILPAAVLAMPRLGCINVHGSLLPRWRGAAPIQRSVWAGDEKTGITIMQMDIGLDTGAMLHKIECAIQPEDTSATLYDKLAQLGPQGLLITLQQLAAGTALAEVQNETQATYAEKLSKEEAKLDWTLSATQLERCIRAFNPWPVSYFIVDEQPIKVWQAQVLPAGEDAEPGTIIHADKHGIQVATADGVLNITQLQPAGKKAMSAADLLNSRREWFIPGSQLV</sequence>
<keyword id="KW-0648">Protein biosynthesis</keyword>
<keyword id="KW-0808">Transferase</keyword>
<feature type="chain" id="PRO_1000098465" description="Methionyl-tRNA formyltransferase">
    <location>
        <begin position="1"/>
        <end position="315"/>
    </location>
</feature>
<feature type="binding site" evidence="1">
    <location>
        <begin position="113"/>
        <end position="116"/>
    </location>
    <ligand>
        <name>(6S)-5,6,7,8-tetrahydrofolate</name>
        <dbReference type="ChEBI" id="CHEBI:57453"/>
    </ligand>
</feature>
<comment type="function">
    <text evidence="1">Attaches a formyl group to the free amino group of methionyl-tRNA(fMet). The formyl group appears to play a dual role in the initiator identity of N-formylmethionyl-tRNA by promoting its recognition by IF2 and preventing the misappropriation of this tRNA by the elongation apparatus.</text>
</comment>
<comment type="catalytic activity">
    <reaction evidence="1">
        <text>L-methionyl-tRNA(fMet) + (6R)-10-formyltetrahydrofolate = N-formyl-L-methionyl-tRNA(fMet) + (6S)-5,6,7,8-tetrahydrofolate + H(+)</text>
        <dbReference type="Rhea" id="RHEA:24380"/>
        <dbReference type="Rhea" id="RHEA-COMP:9952"/>
        <dbReference type="Rhea" id="RHEA-COMP:9953"/>
        <dbReference type="ChEBI" id="CHEBI:15378"/>
        <dbReference type="ChEBI" id="CHEBI:57453"/>
        <dbReference type="ChEBI" id="CHEBI:78530"/>
        <dbReference type="ChEBI" id="CHEBI:78844"/>
        <dbReference type="ChEBI" id="CHEBI:195366"/>
        <dbReference type="EC" id="2.1.2.9"/>
    </reaction>
</comment>
<comment type="similarity">
    <text evidence="1">Belongs to the Fmt family.</text>
</comment>
<proteinExistence type="inferred from homology"/>
<organism>
    <name type="scientific">Yersinia pestis bv. Antiqua (strain Angola)</name>
    <dbReference type="NCBI Taxonomy" id="349746"/>
    <lineage>
        <taxon>Bacteria</taxon>
        <taxon>Pseudomonadati</taxon>
        <taxon>Pseudomonadota</taxon>
        <taxon>Gammaproteobacteria</taxon>
        <taxon>Enterobacterales</taxon>
        <taxon>Yersiniaceae</taxon>
        <taxon>Yersinia</taxon>
    </lineage>
</organism>
<protein>
    <recommendedName>
        <fullName evidence="1">Methionyl-tRNA formyltransferase</fullName>
        <ecNumber evidence="1">2.1.2.9</ecNumber>
    </recommendedName>
</protein>
<evidence type="ECO:0000255" key="1">
    <source>
        <dbReference type="HAMAP-Rule" id="MF_00182"/>
    </source>
</evidence>
<name>FMT_YERPG</name>
<accession>A9R926</accession>
<gene>
    <name evidence="1" type="primary">fmt</name>
    <name type="ordered locus">YpAngola_A0614</name>
</gene>
<reference key="1">
    <citation type="journal article" date="2010" name="J. Bacteriol.">
        <title>Genome sequence of the deep-rooted Yersinia pestis strain Angola reveals new insights into the evolution and pangenome of the plague bacterium.</title>
        <authorList>
            <person name="Eppinger M."/>
            <person name="Worsham P.L."/>
            <person name="Nikolich M.P."/>
            <person name="Riley D.R."/>
            <person name="Sebastian Y."/>
            <person name="Mou S."/>
            <person name="Achtman M."/>
            <person name="Lindler L.E."/>
            <person name="Ravel J."/>
        </authorList>
    </citation>
    <scope>NUCLEOTIDE SEQUENCE [LARGE SCALE GENOMIC DNA]</scope>
    <source>
        <strain>Angola</strain>
    </source>
</reference>